<comment type="function">
    <text evidence="3">Receptor for different ligands such as phospholipids, cholesterol ester, lipoproteins, phosphatidylserine and apoptotic cells. Receptor for HDL, mediating selective uptake of cholesteryl ether and HDL-dependent cholesterol efflux. Also facilitates the flux of free and esterified cholesterol between the cell surface and apoB-containing lipoproteins and modified lipoproteins, although less efficiently than HDL. May be involved in the phagocytosis of apoptotic cells, via its phosphatidylserine binding activity.</text>
</comment>
<comment type="subcellular location">
    <subcellularLocation>
        <location evidence="3">Cell membrane</location>
        <topology evidence="1">Multi-pass membrane protein</topology>
    </subcellularLocation>
    <subcellularLocation>
        <location evidence="2">Membrane</location>
        <location evidence="2">Caveola</location>
        <topology evidence="1">Multi-pass membrane protein</topology>
    </subcellularLocation>
    <text evidence="1">Predominantly localized to cholesterol and sphingomyelin-enriched domains within the plasma membrane, called caveolae.</text>
</comment>
<comment type="PTM">
    <text evidence="1">N-glycosylated.</text>
</comment>
<comment type="PTM">
    <text evidence="1">The six cysteines of the extracellular domain are all involved in intramolecular disulfide bonds.</text>
</comment>
<comment type="similarity">
    <text evidence="5">Belongs to the CD36 family.</text>
</comment>
<proteinExistence type="evidence at transcript level"/>
<protein>
    <recommendedName>
        <fullName>Scavenger receptor class B member 1</fullName>
        <shortName>SRB1</shortName>
    </recommendedName>
    <alternativeName>
        <fullName>HaSR-BI</fullName>
    </alternativeName>
    <alternativeName>
        <fullName>SR-BI</fullName>
    </alternativeName>
</protein>
<keyword id="KW-1003">Cell membrane</keyword>
<keyword id="KW-1015">Disulfide bond</keyword>
<keyword id="KW-0325">Glycoprotein</keyword>
<keyword id="KW-0472">Membrane</keyword>
<keyword id="KW-0675">Receptor</keyword>
<keyword id="KW-0812">Transmembrane</keyword>
<keyword id="KW-1133">Transmembrane helix</keyword>
<sequence>MGGSARARWVAVGLGVVGLLCAVLGVVMILVMPSLIKQQVLKNVRIDPSSLSFAMWKEIPVPFYLSVYFFEVVNPSEILKGEKPVVRERGPYVYREFRHKANITFNDNDTVSFVEHRSLHFQPDRSHGSESDYIILPNILVLGGAVMMESKSAGLKLMMTLGLATLGQRAFMNRTVGEILWGYEDPFVNFINKYLPDMFPIKGKFGLFVEMNNSDSGLFTVFTGVQNFSKIHLVDRWNGLSKVNYWHSEQCNMINGTSGQMWAPFMTPQSSLEFFSPEACRSMKLTYHDSGVFEGIPTYRFTAPKTLFANGSVYPPNEGFCPCLESGIQNVSTCRFGAPLFLSHPHFYNADPVLSEAVLGLNPDPREHSLFLDIHPVTGIPMNCSVKLQISLYIKAVKGIGQTGKIEPVVLPLLWFEQSGAMGGEPLNTFYTQLVLMPQVLQYVQYVLLGLGGLLLLVPVIYQLRSQEKCFLFWSGSKKGSQDKEAIQAYSESLMSPAAKGTVLQEAKL</sequence>
<reference key="1">
    <citation type="journal article" date="1994" name="J. Biol. Chem.">
        <title>Expression cloning of SR-BI, a CD36-related class B scavenger receptor.</title>
        <authorList>
            <person name="Acton S.L."/>
            <person name="Scherer P.E."/>
            <person name="Lodish H.F."/>
            <person name="Krieger M."/>
        </authorList>
    </citation>
    <scope>NUCLEOTIDE SEQUENCE [MRNA]</scope>
    <source>
        <tissue>Ovarian carcinoma</tissue>
    </source>
</reference>
<evidence type="ECO:0000250" key="1"/>
<evidence type="ECO:0000250" key="2">
    <source>
        <dbReference type="UniProtKB" id="Q61009"/>
    </source>
</evidence>
<evidence type="ECO:0000250" key="3">
    <source>
        <dbReference type="UniProtKB" id="Q8WTV0"/>
    </source>
</evidence>
<evidence type="ECO:0000255" key="4"/>
<evidence type="ECO:0000305" key="5"/>
<gene>
    <name type="primary">SCARB1</name>
</gene>
<name>SCRB1_CRIGR</name>
<accession>Q60417</accession>
<dbReference type="EMBL" id="U11453">
    <property type="protein sequence ID" value="AAA61572.1"/>
    <property type="molecule type" value="mRNA"/>
</dbReference>
<dbReference type="PIR" id="A53920">
    <property type="entry name" value="A53920"/>
</dbReference>
<dbReference type="RefSeq" id="NP_001231777.1">
    <property type="nucleotide sequence ID" value="NM_001244848.2"/>
</dbReference>
<dbReference type="RefSeq" id="XP_016833814.1">
    <property type="nucleotide sequence ID" value="XM_016978325.1"/>
</dbReference>
<dbReference type="SMR" id="Q60417"/>
<dbReference type="GlyCosmos" id="Q60417">
    <property type="glycosylation" value="9 sites, No reported glycans"/>
</dbReference>
<dbReference type="PaxDb" id="10029-NP_001231777.1"/>
<dbReference type="Ensembl" id="ENSCGRT00001020889.1">
    <property type="protein sequence ID" value="ENSCGRP00001016645.1"/>
    <property type="gene ID" value="ENSCGRG00001016917.1"/>
</dbReference>
<dbReference type="GeneID" id="100736552"/>
<dbReference type="KEGG" id="cge:100736552"/>
<dbReference type="CTD" id="949"/>
<dbReference type="eggNOG" id="KOG3776">
    <property type="taxonomic scope" value="Eukaryota"/>
</dbReference>
<dbReference type="GeneTree" id="ENSGT00940000153372"/>
<dbReference type="OrthoDB" id="514335at2759"/>
<dbReference type="Proteomes" id="UP000694386">
    <property type="component" value="Unplaced"/>
</dbReference>
<dbReference type="Proteomes" id="UP001108280">
    <property type="component" value="Chromosome 4"/>
</dbReference>
<dbReference type="GO" id="GO:0005901">
    <property type="term" value="C:caveola"/>
    <property type="evidence" value="ECO:0007669"/>
    <property type="project" value="UniProtKB-SubCell"/>
</dbReference>
<dbReference type="GO" id="GO:0009986">
    <property type="term" value="C:cell surface"/>
    <property type="evidence" value="ECO:0007669"/>
    <property type="project" value="Ensembl"/>
</dbReference>
<dbReference type="GO" id="GO:0005764">
    <property type="term" value="C:lysosome"/>
    <property type="evidence" value="ECO:0007669"/>
    <property type="project" value="Ensembl"/>
</dbReference>
<dbReference type="GO" id="GO:0001540">
    <property type="term" value="F:amyloid-beta binding"/>
    <property type="evidence" value="ECO:0007669"/>
    <property type="project" value="Ensembl"/>
</dbReference>
<dbReference type="GO" id="GO:0034186">
    <property type="term" value="F:apolipoprotein A-I binding"/>
    <property type="evidence" value="ECO:0007669"/>
    <property type="project" value="Ensembl"/>
</dbReference>
<dbReference type="GO" id="GO:0008035">
    <property type="term" value="F:high-density lipoprotein particle binding"/>
    <property type="evidence" value="ECO:0007669"/>
    <property type="project" value="Ensembl"/>
</dbReference>
<dbReference type="GO" id="GO:0070506">
    <property type="term" value="F:high-density lipoprotein particle receptor activity"/>
    <property type="evidence" value="ECO:0007669"/>
    <property type="project" value="Ensembl"/>
</dbReference>
<dbReference type="GO" id="GO:0001530">
    <property type="term" value="F:lipopolysaccharide binding"/>
    <property type="evidence" value="ECO:0007669"/>
    <property type="project" value="Ensembl"/>
</dbReference>
<dbReference type="GO" id="GO:0001875">
    <property type="term" value="F:lipopolysaccharide immune receptor activity"/>
    <property type="evidence" value="ECO:0007669"/>
    <property type="project" value="Ensembl"/>
</dbReference>
<dbReference type="GO" id="GO:0030169">
    <property type="term" value="F:low-density lipoprotein particle binding"/>
    <property type="evidence" value="ECO:0007669"/>
    <property type="project" value="Ensembl"/>
</dbReference>
<dbReference type="GO" id="GO:0005044">
    <property type="term" value="F:scavenger receptor activity"/>
    <property type="evidence" value="ECO:0007669"/>
    <property type="project" value="TreeGrafter"/>
</dbReference>
<dbReference type="GO" id="GO:0044406">
    <property type="term" value="P:adhesion of symbiont to host"/>
    <property type="evidence" value="ECO:0007669"/>
    <property type="project" value="Ensembl"/>
</dbReference>
<dbReference type="GO" id="GO:0043534">
    <property type="term" value="P:blood vessel endothelial cell migration"/>
    <property type="evidence" value="ECO:0007669"/>
    <property type="project" value="Ensembl"/>
</dbReference>
<dbReference type="GO" id="GO:0006707">
    <property type="term" value="P:cholesterol catabolic process"/>
    <property type="evidence" value="ECO:0007669"/>
    <property type="project" value="Ensembl"/>
</dbReference>
<dbReference type="GO" id="GO:0033344">
    <property type="term" value="P:cholesterol efflux"/>
    <property type="evidence" value="ECO:0007669"/>
    <property type="project" value="Ensembl"/>
</dbReference>
<dbReference type="GO" id="GO:0042632">
    <property type="term" value="P:cholesterol homeostasis"/>
    <property type="evidence" value="ECO:0007669"/>
    <property type="project" value="Ensembl"/>
</dbReference>
<dbReference type="GO" id="GO:0070508">
    <property type="term" value="P:cholesterol import"/>
    <property type="evidence" value="ECO:0007669"/>
    <property type="project" value="Ensembl"/>
</dbReference>
<dbReference type="GO" id="GO:0032497">
    <property type="term" value="P:detection of lipopolysaccharide"/>
    <property type="evidence" value="ECO:0007669"/>
    <property type="project" value="Ensembl"/>
</dbReference>
<dbReference type="GO" id="GO:0001935">
    <property type="term" value="P:endothelial cell proliferation"/>
    <property type="evidence" value="ECO:0007669"/>
    <property type="project" value="Ensembl"/>
</dbReference>
<dbReference type="GO" id="GO:0055097">
    <property type="term" value="P:high density lipoprotein particle mediated signaling"/>
    <property type="evidence" value="ECO:0007669"/>
    <property type="project" value="Ensembl"/>
</dbReference>
<dbReference type="GO" id="GO:0034384">
    <property type="term" value="P:high-density lipoprotein particle clearance"/>
    <property type="evidence" value="ECO:0007669"/>
    <property type="project" value="Ensembl"/>
</dbReference>
<dbReference type="GO" id="GO:0034375">
    <property type="term" value="P:high-density lipoprotein particle remodeling"/>
    <property type="evidence" value="ECO:0007669"/>
    <property type="project" value="Ensembl"/>
</dbReference>
<dbReference type="GO" id="GO:0098856">
    <property type="term" value="P:intestinal lipid absorption"/>
    <property type="evidence" value="ECO:0007669"/>
    <property type="project" value="Ensembl"/>
</dbReference>
<dbReference type="GO" id="GO:0015920">
    <property type="term" value="P:lipopolysaccharide transport"/>
    <property type="evidence" value="ECO:0007669"/>
    <property type="project" value="Ensembl"/>
</dbReference>
<dbReference type="GO" id="GO:0034383">
    <property type="term" value="P:low-density lipoprotein particle clearance"/>
    <property type="evidence" value="ECO:0007669"/>
    <property type="project" value="Ensembl"/>
</dbReference>
<dbReference type="GO" id="GO:0015914">
    <property type="term" value="P:phospholipid transport"/>
    <property type="evidence" value="ECO:0007669"/>
    <property type="project" value="Ensembl"/>
</dbReference>
<dbReference type="GO" id="GO:0010886">
    <property type="term" value="P:positive regulation of cholesterol storage"/>
    <property type="evidence" value="ECO:0007669"/>
    <property type="project" value="Ensembl"/>
</dbReference>
<dbReference type="GO" id="GO:0010750">
    <property type="term" value="P:positive regulation of nitric oxide mediated signal transduction"/>
    <property type="evidence" value="ECO:0007669"/>
    <property type="project" value="Ensembl"/>
</dbReference>
<dbReference type="GO" id="GO:1902070">
    <property type="term" value="P:positive regulation of sphingolipid mediated signaling pathway"/>
    <property type="evidence" value="ECO:0007669"/>
    <property type="project" value="Ensembl"/>
</dbReference>
<dbReference type="GO" id="GO:0010867">
    <property type="term" value="P:positive regulation of triglyceride biosynthetic process"/>
    <property type="evidence" value="ECO:0007669"/>
    <property type="project" value="Ensembl"/>
</dbReference>
<dbReference type="GO" id="GO:0043654">
    <property type="term" value="P:recognition of apoptotic cell"/>
    <property type="evidence" value="ECO:0007669"/>
    <property type="project" value="Ensembl"/>
</dbReference>
<dbReference type="GO" id="GO:0010899">
    <property type="term" value="P:regulation of phosphatidylcholine catabolic process"/>
    <property type="evidence" value="ECO:0007669"/>
    <property type="project" value="Ensembl"/>
</dbReference>
<dbReference type="GO" id="GO:0043691">
    <property type="term" value="P:reverse cholesterol transport"/>
    <property type="evidence" value="ECO:0007669"/>
    <property type="project" value="Ensembl"/>
</dbReference>
<dbReference type="GO" id="GO:0070328">
    <property type="term" value="P:triglyceride homeostasis"/>
    <property type="evidence" value="ECO:0007669"/>
    <property type="project" value="Ensembl"/>
</dbReference>
<dbReference type="GO" id="GO:0042311">
    <property type="term" value="P:vasodilation"/>
    <property type="evidence" value="ECO:0007669"/>
    <property type="project" value="Ensembl"/>
</dbReference>
<dbReference type="GO" id="GO:0035461">
    <property type="term" value="P:vitamin transmembrane transport"/>
    <property type="evidence" value="ECO:0007669"/>
    <property type="project" value="Ensembl"/>
</dbReference>
<dbReference type="InterPro" id="IPR005428">
    <property type="entry name" value="CD36/SCARB1/SNMP1"/>
</dbReference>
<dbReference type="InterPro" id="IPR002159">
    <property type="entry name" value="CD36_fam"/>
</dbReference>
<dbReference type="PANTHER" id="PTHR11923:SF110">
    <property type="entry name" value="SCAVENGER RECEPTOR CLASS B MEMBER 1"/>
    <property type="match status" value="1"/>
</dbReference>
<dbReference type="PANTHER" id="PTHR11923">
    <property type="entry name" value="SCAVENGER RECEPTOR CLASS B TYPE-1 SR-B1"/>
    <property type="match status" value="1"/>
</dbReference>
<dbReference type="Pfam" id="PF01130">
    <property type="entry name" value="CD36"/>
    <property type="match status" value="1"/>
</dbReference>
<dbReference type="PRINTS" id="PR01610">
    <property type="entry name" value="CD36ANTIGEN"/>
</dbReference>
<dbReference type="PRINTS" id="PR01609">
    <property type="entry name" value="CD36FAMILY"/>
</dbReference>
<feature type="chain" id="PRO_0000144159" description="Scavenger receptor class B member 1">
    <location>
        <begin position="1"/>
        <end position="509"/>
    </location>
</feature>
<feature type="topological domain" description="Cytoplasmic" evidence="4">
    <location>
        <begin position="1"/>
        <end position="11"/>
    </location>
</feature>
<feature type="transmembrane region" description="Helical" evidence="4">
    <location>
        <begin position="12"/>
        <end position="32"/>
    </location>
</feature>
<feature type="topological domain" description="Extracellular" evidence="4">
    <location>
        <begin position="33"/>
        <end position="440"/>
    </location>
</feature>
<feature type="transmembrane region" description="Helical" evidence="4">
    <location>
        <begin position="441"/>
        <end position="461"/>
    </location>
</feature>
<feature type="topological domain" description="Cytoplasmic" evidence="4">
    <location>
        <begin position="462"/>
        <end position="509"/>
    </location>
</feature>
<feature type="glycosylation site" description="N-linked (GlcNAc...) asparagine" evidence="4">
    <location>
        <position position="102"/>
    </location>
</feature>
<feature type="glycosylation site" description="N-linked (GlcNAc...) asparagine" evidence="4">
    <location>
        <position position="108"/>
    </location>
</feature>
<feature type="glycosylation site" description="N-linked (GlcNAc...) asparagine" evidence="4">
    <location>
        <position position="173"/>
    </location>
</feature>
<feature type="glycosylation site" description="N-linked (GlcNAc...) asparagine" evidence="4">
    <location>
        <position position="212"/>
    </location>
</feature>
<feature type="glycosylation site" description="N-linked (GlcNAc...) asparagine" evidence="4">
    <location>
        <position position="227"/>
    </location>
</feature>
<feature type="glycosylation site" description="N-linked (GlcNAc...) asparagine" evidence="4">
    <location>
        <position position="255"/>
    </location>
</feature>
<feature type="glycosylation site" description="N-linked (GlcNAc...) asparagine" evidence="4">
    <location>
        <position position="310"/>
    </location>
</feature>
<feature type="glycosylation site" description="N-linked (GlcNAc...) asparagine" evidence="4">
    <location>
        <position position="330"/>
    </location>
</feature>
<feature type="glycosylation site" description="N-linked (GlcNAc...) asparagine" evidence="4">
    <location>
        <position position="383"/>
    </location>
</feature>
<feature type="disulfide bond" evidence="1">
    <location>
        <begin position="251"/>
        <end position="384"/>
    </location>
</feature>
<organism>
    <name type="scientific">Cricetulus griseus</name>
    <name type="common">Chinese hamster</name>
    <name type="synonym">Cricetulus barabensis griseus</name>
    <dbReference type="NCBI Taxonomy" id="10029"/>
    <lineage>
        <taxon>Eukaryota</taxon>
        <taxon>Metazoa</taxon>
        <taxon>Chordata</taxon>
        <taxon>Craniata</taxon>
        <taxon>Vertebrata</taxon>
        <taxon>Euteleostomi</taxon>
        <taxon>Mammalia</taxon>
        <taxon>Eutheria</taxon>
        <taxon>Euarchontoglires</taxon>
        <taxon>Glires</taxon>
        <taxon>Rodentia</taxon>
        <taxon>Myomorpha</taxon>
        <taxon>Muroidea</taxon>
        <taxon>Cricetidae</taxon>
        <taxon>Cricetinae</taxon>
        <taxon>Cricetulus</taxon>
    </lineage>
</organism>